<evidence type="ECO:0000250" key="1"/>
<evidence type="ECO:0000255" key="2"/>
<evidence type="ECO:0000305" key="3"/>
<accession>O81825</accession>
<accession>Q1PE46</accession>
<comment type="function">
    <text evidence="1">Probable disease resistance protein.</text>
</comment>
<comment type="domain">
    <text evidence="1">The LRR repeats probably act as specificity determinant of pathogen recognition.</text>
</comment>
<comment type="similarity">
    <text evidence="3">Belongs to the disease resistance NB-LRR family.</text>
</comment>
<comment type="online information" name="NIB-LRRS">
    <link uri="http://niblrrs.ucdavis.edu"/>
    <text>Functional and comparative genomics of disease resistance gene homologs</text>
</comment>
<keyword id="KW-0067">ATP-binding</keyword>
<keyword id="KW-0175">Coiled coil</keyword>
<keyword id="KW-0433">Leucine-rich repeat</keyword>
<keyword id="KW-0547">Nucleotide-binding</keyword>
<keyword id="KW-0611">Plant defense</keyword>
<keyword id="KW-1185">Reference proteome</keyword>
<keyword id="KW-0677">Repeat</keyword>
<protein>
    <recommendedName>
        <fullName>Probable disease resistance protein At4g27220</fullName>
    </recommendedName>
</protein>
<gene>
    <name type="ordered locus">At4g27220</name>
    <name type="ORF">M4I22.30</name>
</gene>
<organism>
    <name type="scientific">Arabidopsis thaliana</name>
    <name type="common">Mouse-ear cress</name>
    <dbReference type="NCBI Taxonomy" id="3702"/>
    <lineage>
        <taxon>Eukaryota</taxon>
        <taxon>Viridiplantae</taxon>
        <taxon>Streptophyta</taxon>
        <taxon>Embryophyta</taxon>
        <taxon>Tracheophyta</taxon>
        <taxon>Spermatophyta</taxon>
        <taxon>Magnoliopsida</taxon>
        <taxon>eudicotyledons</taxon>
        <taxon>Gunneridae</taxon>
        <taxon>Pentapetalae</taxon>
        <taxon>rosids</taxon>
        <taxon>malvids</taxon>
        <taxon>Brassicales</taxon>
        <taxon>Brassicaceae</taxon>
        <taxon>Camelineae</taxon>
        <taxon>Arabidopsis</taxon>
    </lineage>
</organism>
<proteinExistence type="evidence at transcript level"/>
<feature type="chain" id="PRO_0000212760" description="Probable disease resistance protein At4g27220">
    <location>
        <begin position="1"/>
        <end position="919"/>
    </location>
</feature>
<feature type="domain" description="NB-ARC">
    <location>
        <begin position="121"/>
        <end position="399"/>
    </location>
</feature>
<feature type="repeat" description="LRR 1">
    <location>
        <begin position="447"/>
        <end position="468"/>
    </location>
</feature>
<feature type="repeat" description="LRR 2">
    <location>
        <begin position="469"/>
        <end position="492"/>
    </location>
</feature>
<feature type="repeat" description="LRR 3">
    <location>
        <begin position="494"/>
        <end position="516"/>
    </location>
</feature>
<feature type="repeat" description="LRR 4">
    <location>
        <begin position="519"/>
        <end position="540"/>
    </location>
</feature>
<feature type="repeat" description="LRR 5">
    <location>
        <begin position="542"/>
        <end position="564"/>
    </location>
</feature>
<feature type="repeat" description="LRR 6">
    <location>
        <begin position="565"/>
        <end position="587"/>
    </location>
</feature>
<feature type="repeat" description="LRR 7">
    <location>
        <begin position="588"/>
        <end position="610"/>
    </location>
</feature>
<feature type="repeat" description="LRR 8">
    <location>
        <begin position="611"/>
        <end position="635"/>
    </location>
</feature>
<feature type="coiled-coil region" evidence="2">
    <location>
        <begin position="1"/>
        <end position="30"/>
    </location>
</feature>
<feature type="coiled-coil region" evidence="2">
    <location>
        <begin position="74"/>
        <end position="95"/>
    </location>
</feature>
<feature type="binding site" evidence="2">
    <location>
        <begin position="141"/>
        <end position="148"/>
    </location>
    <ligand>
        <name>ATP</name>
        <dbReference type="ChEBI" id="CHEBI:30616"/>
    </ligand>
</feature>
<reference key="1">
    <citation type="journal article" date="1999" name="Nature">
        <title>Sequence and analysis of chromosome 4 of the plant Arabidopsis thaliana.</title>
        <authorList>
            <person name="Mayer K.F.X."/>
            <person name="Schueller C."/>
            <person name="Wambutt R."/>
            <person name="Murphy G."/>
            <person name="Volckaert G."/>
            <person name="Pohl T."/>
            <person name="Duesterhoeft A."/>
            <person name="Stiekema W."/>
            <person name="Entian K.-D."/>
            <person name="Terryn N."/>
            <person name="Harris B."/>
            <person name="Ansorge W."/>
            <person name="Brandt P."/>
            <person name="Grivell L.A."/>
            <person name="Rieger M."/>
            <person name="Weichselgartner M."/>
            <person name="de Simone V."/>
            <person name="Obermaier B."/>
            <person name="Mache R."/>
            <person name="Mueller M."/>
            <person name="Kreis M."/>
            <person name="Delseny M."/>
            <person name="Puigdomenech P."/>
            <person name="Watson M."/>
            <person name="Schmidtheini T."/>
            <person name="Reichert B."/>
            <person name="Portetelle D."/>
            <person name="Perez-Alonso M."/>
            <person name="Boutry M."/>
            <person name="Bancroft I."/>
            <person name="Vos P."/>
            <person name="Hoheisel J."/>
            <person name="Zimmermann W."/>
            <person name="Wedler H."/>
            <person name="Ridley P."/>
            <person name="Langham S.-A."/>
            <person name="McCullagh B."/>
            <person name="Bilham L."/>
            <person name="Robben J."/>
            <person name="van der Schueren J."/>
            <person name="Grymonprez B."/>
            <person name="Chuang Y.-J."/>
            <person name="Vandenbussche F."/>
            <person name="Braeken M."/>
            <person name="Weltjens I."/>
            <person name="Voet M."/>
            <person name="Bastiaens I."/>
            <person name="Aert R."/>
            <person name="Defoor E."/>
            <person name="Weitzenegger T."/>
            <person name="Bothe G."/>
            <person name="Ramsperger U."/>
            <person name="Hilbert H."/>
            <person name="Braun M."/>
            <person name="Holzer E."/>
            <person name="Brandt A."/>
            <person name="Peters S."/>
            <person name="van Staveren M."/>
            <person name="Dirkse W."/>
            <person name="Mooijman P."/>
            <person name="Klein Lankhorst R."/>
            <person name="Rose M."/>
            <person name="Hauf J."/>
            <person name="Koetter P."/>
            <person name="Berneiser S."/>
            <person name="Hempel S."/>
            <person name="Feldpausch M."/>
            <person name="Lamberth S."/>
            <person name="Van den Daele H."/>
            <person name="De Keyser A."/>
            <person name="Buysshaert C."/>
            <person name="Gielen J."/>
            <person name="Villarroel R."/>
            <person name="De Clercq R."/>
            <person name="van Montagu M."/>
            <person name="Rogers J."/>
            <person name="Cronin A."/>
            <person name="Quail M.A."/>
            <person name="Bray-Allen S."/>
            <person name="Clark L."/>
            <person name="Doggett J."/>
            <person name="Hall S."/>
            <person name="Kay M."/>
            <person name="Lennard N."/>
            <person name="McLay K."/>
            <person name="Mayes R."/>
            <person name="Pettett A."/>
            <person name="Rajandream M.A."/>
            <person name="Lyne M."/>
            <person name="Benes V."/>
            <person name="Rechmann S."/>
            <person name="Borkova D."/>
            <person name="Bloecker H."/>
            <person name="Scharfe M."/>
            <person name="Grimm M."/>
            <person name="Loehnert T.-H."/>
            <person name="Dose S."/>
            <person name="de Haan M."/>
            <person name="Maarse A.C."/>
            <person name="Schaefer M."/>
            <person name="Mueller-Auer S."/>
            <person name="Gabel C."/>
            <person name="Fuchs M."/>
            <person name="Fartmann B."/>
            <person name="Granderath K."/>
            <person name="Dauner D."/>
            <person name="Herzl A."/>
            <person name="Neumann S."/>
            <person name="Argiriou A."/>
            <person name="Vitale D."/>
            <person name="Liguori R."/>
            <person name="Piravandi E."/>
            <person name="Massenet O."/>
            <person name="Quigley F."/>
            <person name="Clabauld G."/>
            <person name="Muendlein A."/>
            <person name="Felber R."/>
            <person name="Schnabl S."/>
            <person name="Hiller R."/>
            <person name="Schmidt W."/>
            <person name="Lecharny A."/>
            <person name="Aubourg S."/>
            <person name="Chefdor F."/>
            <person name="Cooke R."/>
            <person name="Berger C."/>
            <person name="Monfort A."/>
            <person name="Casacuberta E."/>
            <person name="Gibbons T."/>
            <person name="Weber N."/>
            <person name="Vandenbol M."/>
            <person name="Bargues M."/>
            <person name="Terol J."/>
            <person name="Torres A."/>
            <person name="Perez-Perez A."/>
            <person name="Purnelle B."/>
            <person name="Bent E."/>
            <person name="Johnson S."/>
            <person name="Tacon D."/>
            <person name="Jesse T."/>
            <person name="Heijnen L."/>
            <person name="Schwarz S."/>
            <person name="Scholler P."/>
            <person name="Heber S."/>
            <person name="Francs P."/>
            <person name="Bielke C."/>
            <person name="Frishman D."/>
            <person name="Haase D."/>
            <person name="Lemcke K."/>
            <person name="Mewes H.-W."/>
            <person name="Stocker S."/>
            <person name="Zaccaria P."/>
            <person name="Bevan M."/>
            <person name="Wilson R.K."/>
            <person name="de la Bastide M."/>
            <person name="Habermann K."/>
            <person name="Parnell L."/>
            <person name="Dedhia N."/>
            <person name="Gnoj L."/>
            <person name="Schutz K."/>
            <person name="Huang E."/>
            <person name="Spiegel L."/>
            <person name="Sekhon M."/>
            <person name="Murray J."/>
            <person name="Sheet P."/>
            <person name="Cordes M."/>
            <person name="Abu-Threideh J."/>
            <person name="Stoneking T."/>
            <person name="Kalicki J."/>
            <person name="Graves T."/>
            <person name="Harmon G."/>
            <person name="Edwards J."/>
            <person name="Latreille P."/>
            <person name="Courtney L."/>
            <person name="Cloud J."/>
            <person name="Abbott A."/>
            <person name="Scott K."/>
            <person name="Johnson D."/>
            <person name="Minx P."/>
            <person name="Bentley D."/>
            <person name="Fulton B."/>
            <person name="Miller N."/>
            <person name="Greco T."/>
            <person name="Kemp K."/>
            <person name="Kramer J."/>
            <person name="Fulton L."/>
            <person name="Mardis E."/>
            <person name="Dante M."/>
            <person name="Pepin K."/>
            <person name="Hillier L.W."/>
            <person name="Nelson J."/>
            <person name="Spieth J."/>
            <person name="Ryan E."/>
            <person name="Andrews S."/>
            <person name="Geisel C."/>
            <person name="Layman D."/>
            <person name="Du H."/>
            <person name="Ali J."/>
            <person name="Berghoff A."/>
            <person name="Jones K."/>
            <person name="Drone K."/>
            <person name="Cotton M."/>
            <person name="Joshu C."/>
            <person name="Antonoiu B."/>
            <person name="Zidanic M."/>
            <person name="Strong C."/>
            <person name="Sun H."/>
            <person name="Lamar B."/>
            <person name="Yordan C."/>
            <person name="Ma P."/>
            <person name="Zhong J."/>
            <person name="Preston R."/>
            <person name="Vil D."/>
            <person name="Shekher M."/>
            <person name="Matero A."/>
            <person name="Shah R."/>
            <person name="Swaby I.K."/>
            <person name="O'Shaughnessy A."/>
            <person name="Rodriguez M."/>
            <person name="Hoffman J."/>
            <person name="Till S."/>
            <person name="Granat S."/>
            <person name="Shohdy N."/>
            <person name="Hasegawa A."/>
            <person name="Hameed A."/>
            <person name="Lodhi M."/>
            <person name="Johnson A."/>
            <person name="Chen E."/>
            <person name="Marra M.A."/>
            <person name="Martienssen R."/>
            <person name="McCombie W.R."/>
        </authorList>
    </citation>
    <scope>NUCLEOTIDE SEQUENCE [LARGE SCALE GENOMIC DNA]</scope>
    <source>
        <strain>cv. Columbia</strain>
    </source>
</reference>
<reference key="2">
    <citation type="journal article" date="2017" name="Plant J.">
        <title>Araport11: a complete reannotation of the Arabidopsis thaliana reference genome.</title>
        <authorList>
            <person name="Cheng C.Y."/>
            <person name="Krishnakumar V."/>
            <person name="Chan A.P."/>
            <person name="Thibaud-Nissen F."/>
            <person name="Schobel S."/>
            <person name="Town C.D."/>
        </authorList>
    </citation>
    <scope>GENOME REANNOTATION</scope>
    <source>
        <strain>cv. Columbia</strain>
    </source>
</reference>
<reference key="3">
    <citation type="journal article" date="2006" name="Plant Biotechnol. J.">
        <title>Simultaneous high-throughput recombinational cloning of open reading frames in closed and open configurations.</title>
        <authorList>
            <person name="Underwood B.A."/>
            <person name="Vanderhaeghen R."/>
            <person name="Whitford R."/>
            <person name="Town C.D."/>
            <person name="Hilson P."/>
        </authorList>
    </citation>
    <scope>NUCLEOTIDE SEQUENCE [LARGE SCALE MRNA]</scope>
    <source>
        <strain>cv. Columbia</strain>
    </source>
</reference>
<name>DRL28_ARATH</name>
<dbReference type="EMBL" id="AL030978">
    <property type="protein sequence ID" value="CAA19716.1"/>
    <property type="molecule type" value="Genomic_DNA"/>
</dbReference>
<dbReference type="EMBL" id="AL161566">
    <property type="protein sequence ID" value="CAB79577.1"/>
    <property type="molecule type" value="Genomic_DNA"/>
</dbReference>
<dbReference type="EMBL" id="CP002687">
    <property type="protein sequence ID" value="AEE85312.1"/>
    <property type="molecule type" value="Genomic_DNA"/>
</dbReference>
<dbReference type="EMBL" id="DQ446872">
    <property type="protein sequence ID" value="ABE66093.1"/>
    <property type="molecule type" value="mRNA"/>
</dbReference>
<dbReference type="PIR" id="T05746">
    <property type="entry name" value="T05746"/>
</dbReference>
<dbReference type="RefSeq" id="NP_194452.1">
    <property type="nucleotide sequence ID" value="NM_118856.1"/>
</dbReference>
<dbReference type="SMR" id="O81825"/>
<dbReference type="STRING" id="3702.O81825"/>
<dbReference type="PaxDb" id="3702-AT4G27220.1"/>
<dbReference type="EnsemblPlants" id="AT4G27220.1">
    <property type="protein sequence ID" value="AT4G27220.1"/>
    <property type="gene ID" value="AT4G27220"/>
</dbReference>
<dbReference type="GeneID" id="828830"/>
<dbReference type="Gramene" id="AT4G27220.1">
    <property type="protein sequence ID" value="AT4G27220.1"/>
    <property type="gene ID" value="AT4G27220"/>
</dbReference>
<dbReference type="KEGG" id="ath:AT4G27220"/>
<dbReference type="Araport" id="AT4G27220"/>
<dbReference type="TAIR" id="AT4G27220"/>
<dbReference type="eggNOG" id="KOG4658">
    <property type="taxonomic scope" value="Eukaryota"/>
</dbReference>
<dbReference type="HOGENOM" id="CLU_000427_2_0_1"/>
<dbReference type="InParanoid" id="O81825"/>
<dbReference type="OMA" id="AIWIMSP"/>
<dbReference type="PhylomeDB" id="O81825"/>
<dbReference type="PRO" id="PR:O81825"/>
<dbReference type="Proteomes" id="UP000006548">
    <property type="component" value="Chromosome 4"/>
</dbReference>
<dbReference type="ExpressionAtlas" id="O81825">
    <property type="expression patterns" value="baseline and differential"/>
</dbReference>
<dbReference type="GO" id="GO:0043531">
    <property type="term" value="F:ADP binding"/>
    <property type="evidence" value="ECO:0007669"/>
    <property type="project" value="InterPro"/>
</dbReference>
<dbReference type="GO" id="GO:0005524">
    <property type="term" value="F:ATP binding"/>
    <property type="evidence" value="ECO:0007669"/>
    <property type="project" value="UniProtKB-KW"/>
</dbReference>
<dbReference type="GO" id="GO:0006952">
    <property type="term" value="P:defense response"/>
    <property type="evidence" value="ECO:0007669"/>
    <property type="project" value="UniProtKB-KW"/>
</dbReference>
<dbReference type="FunFam" id="3.40.50.300:FF:001091">
    <property type="entry name" value="Probable disease resistance protein At1g61300"/>
    <property type="match status" value="1"/>
</dbReference>
<dbReference type="FunFam" id="1.10.10.10:FF:000322">
    <property type="entry name" value="Probable disease resistance protein At1g63360"/>
    <property type="match status" value="1"/>
</dbReference>
<dbReference type="FunFam" id="1.10.8.430:FF:000003">
    <property type="entry name" value="Probable disease resistance protein At5g66910"/>
    <property type="match status" value="1"/>
</dbReference>
<dbReference type="Gene3D" id="1.10.8.430">
    <property type="entry name" value="Helical domain of apoptotic protease-activating factors"/>
    <property type="match status" value="1"/>
</dbReference>
<dbReference type="Gene3D" id="3.40.50.300">
    <property type="entry name" value="P-loop containing nucleotide triphosphate hydrolases"/>
    <property type="match status" value="1"/>
</dbReference>
<dbReference type="Gene3D" id="3.80.10.10">
    <property type="entry name" value="Ribonuclease Inhibitor"/>
    <property type="match status" value="2"/>
</dbReference>
<dbReference type="Gene3D" id="1.10.10.10">
    <property type="entry name" value="Winged helix-like DNA-binding domain superfamily/Winged helix DNA-binding domain"/>
    <property type="match status" value="1"/>
</dbReference>
<dbReference type="InterPro" id="IPR042197">
    <property type="entry name" value="Apaf_helical"/>
</dbReference>
<dbReference type="InterPro" id="IPR003591">
    <property type="entry name" value="Leu-rich_rpt_typical-subtyp"/>
</dbReference>
<dbReference type="InterPro" id="IPR032675">
    <property type="entry name" value="LRR_dom_sf"/>
</dbReference>
<dbReference type="InterPro" id="IPR055414">
    <property type="entry name" value="LRR_R13L4/SHOC2-like"/>
</dbReference>
<dbReference type="InterPro" id="IPR002182">
    <property type="entry name" value="NB-ARC"/>
</dbReference>
<dbReference type="InterPro" id="IPR027417">
    <property type="entry name" value="P-loop_NTPase"/>
</dbReference>
<dbReference type="InterPro" id="IPR050905">
    <property type="entry name" value="Plant_NBS-LRR"/>
</dbReference>
<dbReference type="InterPro" id="IPR036388">
    <property type="entry name" value="WH-like_DNA-bd_sf"/>
</dbReference>
<dbReference type="PANTHER" id="PTHR33463:SF202">
    <property type="entry name" value="NB-ARC DOMAIN-CONTAINING PROTEIN"/>
    <property type="match status" value="1"/>
</dbReference>
<dbReference type="PANTHER" id="PTHR33463">
    <property type="entry name" value="NB-ARC DOMAIN-CONTAINING PROTEIN-RELATED"/>
    <property type="match status" value="1"/>
</dbReference>
<dbReference type="Pfam" id="PF23598">
    <property type="entry name" value="LRR_14"/>
    <property type="match status" value="1"/>
</dbReference>
<dbReference type="Pfam" id="PF23247">
    <property type="entry name" value="LRR_RPS2"/>
    <property type="match status" value="1"/>
</dbReference>
<dbReference type="Pfam" id="PF00931">
    <property type="entry name" value="NB-ARC"/>
    <property type="match status" value="1"/>
</dbReference>
<dbReference type="Pfam" id="PF23559">
    <property type="entry name" value="WH_DRP"/>
    <property type="match status" value="1"/>
</dbReference>
<dbReference type="PRINTS" id="PR00364">
    <property type="entry name" value="DISEASERSIST"/>
</dbReference>
<dbReference type="SMART" id="SM00369">
    <property type="entry name" value="LRR_TYP"/>
    <property type="match status" value="4"/>
</dbReference>
<dbReference type="SUPFAM" id="SSF52058">
    <property type="entry name" value="L domain-like"/>
    <property type="match status" value="1"/>
</dbReference>
<dbReference type="SUPFAM" id="SSF52540">
    <property type="entry name" value="P-loop containing nucleoside triphosphate hydrolases"/>
    <property type="match status" value="1"/>
</dbReference>
<sequence>MFRSNARALNRALERLKNVQTKVNEALKRSGIQEKSLERKLRIWLRKVEENVPLGELILEKRSSCAIWLSDKDVEILEKVKRLEEQGQDLIKKISVNKSSREIVERVLGPSFHPQKTALEMLDKLKDCLKKKNVQKIGVWGMGGVGKTTLVRTLNNDLLKYAATQQFALVIWVTVSKDFDLKRVQMDIAKRLGKRFTREQMNQLGLTICERLIDLKNFLLILDDVWHPIDLDQLGIPLALERSKDSKVVLTSRRLEVCQQMMTNENIKVACLQEKEAWELFCHNVGEVANSDNVKPIAKDVSHECCGLPLAIITIGRTLRGKPQVEVWKHTLNLLKRSAPSIDTEEKIFGTLKLSYDFLQDNMKSCFLFCALFPEDYSIKVSELIMYWVAEGLLDGQHHYEDMMNEGVTLVERLKDSCLLEDGDSCDTVKMHDVVRDFAIWFMSSQGEGFHSLVMAGRGLIEFPQDKFVSSVQRVSLMANKLERLPNNVIEGVETLVLLLQGNSHVKEVPNGFLQAFPNLRILDLSGVRIRTLPDSFSNLHSLRSLVLRNCKKLRNLPSLESLVKLQFLDLHESAIRELPRGLEALSSLRYICVSNTYQLQSIPAGTILQLSSLEVLDMAGSAYSWGIKGEEREGQATLDEVTCLPHLQFLAIKLLDVLSFSYEFDSLTKRLTKFQFLFSPIRSVSPPGTGEGCLAISDVNVSNASIGWLLQHVTSLDLNYCEGLNGMFENLVTKSKSSFVAMKALSIHYFPSLSLASGCESQLDLFPNLEELSLDNVNLESIGELNGFLGMRLQKLKLLQVSGCRQLKRLFSDQILAGTLPNLQEIKVVSCLRLEELFNFSSVPVDFCAESLLPKLTVIKLKYLPQLRSLCNDRVVLESLEHLEVESCESLKNLPFVPGNTGMINEQMAWEYMSRTLG</sequence>